<protein>
    <recommendedName>
        <fullName evidence="1">DNA-directed RNA polymerase subunit beta</fullName>
        <shortName evidence="1">RNAP subunit beta</shortName>
        <ecNumber evidence="1">2.7.7.6</ecNumber>
    </recommendedName>
    <alternativeName>
        <fullName evidence="1">RNA polymerase subunit beta</fullName>
    </alternativeName>
    <alternativeName>
        <fullName evidence="1">Transcriptase subunit beta</fullName>
    </alternativeName>
</protein>
<accession>Q2SU19</accession>
<reference key="1">
    <citation type="journal article" date="2005" name="BMC Genomics">
        <title>Bacterial genome adaptation to niches: divergence of the potential virulence genes in three Burkholderia species of different survival strategies.</title>
        <authorList>
            <person name="Kim H.S."/>
            <person name="Schell M.A."/>
            <person name="Yu Y."/>
            <person name="Ulrich R.L."/>
            <person name="Sarria S.H."/>
            <person name="Nierman W.C."/>
            <person name="DeShazer D."/>
        </authorList>
    </citation>
    <scope>NUCLEOTIDE SEQUENCE [LARGE SCALE GENOMIC DNA]</scope>
    <source>
        <strain>ATCC 700388 / DSM 13276 / CCUG 48851 / CIP 106301 / E264</strain>
    </source>
</reference>
<dbReference type="EC" id="2.7.7.6" evidence="1"/>
<dbReference type="EMBL" id="CP000086">
    <property type="protein sequence ID" value="ABC37846.1"/>
    <property type="molecule type" value="Genomic_DNA"/>
</dbReference>
<dbReference type="RefSeq" id="WP_009906448.1">
    <property type="nucleotide sequence ID" value="NZ_CP008786.1"/>
</dbReference>
<dbReference type="SMR" id="Q2SU19"/>
<dbReference type="GeneID" id="45122764"/>
<dbReference type="KEGG" id="bte:BTH_I3076"/>
<dbReference type="HOGENOM" id="CLU_000524_4_1_4"/>
<dbReference type="Proteomes" id="UP000001930">
    <property type="component" value="Chromosome I"/>
</dbReference>
<dbReference type="GO" id="GO:0000428">
    <property type="term" value="C:DNA-directed RNA polymerase complex"/>
    <property type="evidence" value="ECO:0007669"/>
    <property type="project" value="UniProtKB-KW"/>
</dbReference>
<dbReference type="GO" id="GO:0003677">
    <property type="term" value="F:DNA binding"/>
    <property type="evidence" value="ECO:0007669"/>
    <property type="project" value="UniProtKB-UniRule"/>
</dbReference>
<dbReference type="GO" id="GO:0003899">
    <property type="term" value="F:DNA-directed RNA polymerase activity"/>
    <property type="evidence" value="ECO:0007669"/>
    <property type="project" value="UniProtKB-UniRule"/>
</dbReference>
<dbReference type="GO" id="GO:0032549">
    <property type="term" value="F:ribonucleoside binding"/>
    <property type="evidence" value="ECO:0007669"/>
    <property type="project" value="InterPro"/>
</dbReference>
<dbReference type="GO" id="GO:0006351">
    <property type="term" value="P:DNA-templated transcription"/>
    <property type="evidence" value="ECO:0007669"/>
    <property type="project" value="UniProtKB-UniRule"/>
</dbReference>
<dbReference type="CDD" id="cd00653">
    <property type="entry name" value="RNA_pol_B_RPB2"/>
    <property type="match status" value="1"/>
</dbReference>
<dbReference type="FunFam" id="2.40.50.100:FF:000006">
    <property type="entry name" value="DNA-directed RNA polymerase subunit beta"/>
    <property type="match status" value="1"/>
</dbReference>
<dbReference type="FunFam" id="2.40.50.150:FF:000001">
    <property type="entry name" value="DNA-directed RNA polymerase subunit beta"/>
    <property type="match status" value="1"/>
</dbReference>
<dbReference type="FunFam" id="3.90.1110.10:FF:000004">
    <property type="entry name" value="DNA-directed RNA polymerase subunit beta"/>
    <property type="match status" value="1"/>
</dbReference>
<dbReference type="FunFam" id="3.90.1800.10:FF:000001">
    <property type="entry name" value="DNA-directed RNA polymerase subunit beta"/>
    <property type="match status" value="1"/>
</dbReference>
<dbReference type="Gene3D" id="2.40.50.100">
    <property type="match status" value="1"/>
</dbReference>
<dbReference type="Gene3D" id="2.40.50.150">
    <property type="match status" value="1"/>
</dbReference>
<dbReference type="Gene3D" id="3.90.1100.10">
    <property type="match status" value="2"/>
</dbReference>
<dbReference type="Gene3D" id="2.30.150.10">
    <property type="entry name" value="DNA-directed RNA polymerase, beta subunit, external 1 domain"/>
    <property type="match status" value="1"/>
</dbReference>
<dbReference type="Gene3D" id="2.40.270.10">
    <property type="entry name" value="DNA-directed RNA polymerase, subunit 2, domain 6"/>
    <property type="match status" value="1"/>
</dbReference>
<dbReference type="Gene3D" id="3.90.1800.10">
    <property type="entry name" value="RNA polymerase alpha subunit dimerisation domain"/>
    <property type="match status" value="1"/>
</dbReference>
<dbReference type="Gene3D" id="3.90.1110.10">
    <property type="entry name" value="RNA polymerase Rpb2, domain 2"/>
    <property type="match status" value="1"/>
</dbReference>
<dbReference type="HAMAP" id="MF_01321">
    <property type="entry name" value="RNApol_bact_RpoB"/>
    <property type="match status" value="1"/>
</dbReference>
<dbReference type="InterPro" id="IPR042107">
    <property type="entry name" value="DNA-dir_RNA_pol_bsu_ext_1_sf"/>
</dbReference>
<dbReference type="InterPro" id="IPR019462">
    <property type="entry name" value="DNA-dir_RNA_pol_bsu_external_1"/>
</dbReference>
<dbReference type="InterPro" id="IPR015712">
    <property type="entry name" value="DNA-dir_RNA_pol_su2"/>
</dbReference>
<dbReference type="InterPro" id="IPR007120">
    <property type="entry name" value="DNA-dir_RNAP_su2_dom"/>
</dbReference>
<dbReference type="InterPro" id="IPR037033">
    <property type="entry name" value="DNA-dir_RNAP_su2_hyb_sf"/>
</dbReference>
<dbReference type="InterPro" id="IPR010243">
    <property type="entry name" value="RNA_pol_bsu_bac"/>
</dbReference>
<dbReference type="InterPro" id="IPR007121">
    <property type="entry name" value="RNA_pol_bsu_CS"/>
</dbReference>
<dbReference type="InterPro" id="IPR007644">
    <property type="entry name" value="RNA_pol_bsu_protrusion"/>
</dbReference>
<dbReference type="InterPro" id="IPR007642">
    <property type="entry name" value="RNA_pol_Rpb2_2"/>
</dbReference>
<dbReference type="InterPro" id="IPR037034">
    <property type="entry name" value="RNA_pol_Rpb2_2_sf"/>
</dbReference>
<dbReference type="InterPro" id="IPR007645">
    <property type="entry name" value="RNA_pol_Rpb2_3"/>
</dbReference>
<dbReference type="InterPro" id="IPR007641">
    <property type="entry name" value="RNA_pol_Rpb2_7"/>
</dbReference>
<dbReference type="InterPro" id="IPR014724">
    <property type="entry name" value="RNA_pol_RPB2_OB-fold"/>
</dbReference>
<dbReference type="NCBIfam" id="NF001616">
    <property type="entry name" value="PRK00405.1"/>
    <property type="match status" value="1"/>
</dbReference>
<dbReference type="NCBIfam" id="TIGR02013">
    <property type="entry name" value="rpoB"/>
    <property type="match status" value="1"/>
</dbReference>
<dbReference type="PANTHER" id="PTHR20856">
    <property type="entry name" value="DNA-DIRECTED RNA POLYMERASE I SUBUNIT 2"/>
    <property type="match status" value="1"/>
</dbReference>
<dbReference type="Pfam" id="PF04563">
    <property type="entry name" value="RNA_pol_Rpb2_1"/>
    <property type="match status" value="1"/>
</dbReference>
<dbReference type="Pfam" id="PF04561">
    <property type="entry name" value="RNA_pol_Rpb2_2"/>
    <property type="match status" value="2"/>
</dbReference>
<dbReference type="Pfam" id="PF04565">
    <property type="entry name" value="RNA_pol_Rpb2_3"/>
    <property type="match status" value="1"/>
</dbReference>
<dbReference type="Pfam" id="PF10385">
    <property type="entry name" value="RNA_pol_Rpb2_45"/>
    <property type="match status" value="1"/>
</dbReference>
<dbReference type="Pfam" id="PF00562">
    <property type="entry name" value="RNA_pol_Rpb2_6"/>
    <property type="match status" value="1"/>
</dbReference>
<dbReference type="Pfam" id="PF04560">
    <property type="entry name" value="RNA_pol_Rpb2_7"/>
    <property type="match status" value="1"/>
</dbReference>
<dbReference type="SUPFAM" id="SSF64484">
    <property type="entry name" value="beta and beta-prime subunits of DNA dependent RNA-polymerase"/>
    <property type="match status" value="1"/>
</dbReference>
<dbReference type="PROSITE" id="PS01166">
    <property type="entry name" value="RNA_POL_BETA"/>
    <property type="match status" value="1"/>
</dbReference>
<sequence>MQYSFTEKKRIRKSFAKRSIVHQVPFLLATQLESFSTFLQADVLPAQRKSEGLQAAFTSVFPIVSHNGFARLEFVSYALSSPAFNIKECQQRGLTYCSALRAKVRLVLLDKESPSKPVVKEVKEQEVYMGEIPLMTPTGSFVINGTERVIVSQLHRSPGVFFEHDKGKTHSSGKLLFSARIIPYRGSWLDFEFDPKDVLYFRVDRRRKMPVTILLKAIGLTPEQILANFFVFDNFTLMDEGAQMEFVPERLRGEVARFDITDREGKVIVQKDKRINAKHIRDLEAAKTKYISVPEDYLLGRVLAKNVVDGDTGEVIANANDEITEGVLDKLREAKIKEIQTLYTNDLDQGPYISSTLRVDETVDKTAARIAIYRMMRPGEPPTEEAVEALFNRLFYSEDAYDLSKVGRMKFNRRVGRDEITGPMTLQDDDILATIKILVELRNGKGEVDDIDHLGNRRVRCVGELAENQFRAGLVRVERAVKERLGQAESENLMPHDLINSKPISSAIREFFGSSQLSQFMDQTNPLSEITHKRRVSALGPGGLTRERAGFEVRDVHPTHYGRVCPIETPEGPNIGLINSLALYAHLNEYGFLETPYRKVVDSKVTDQIDYLSAIEEGRYMIAQANAAISNDGSLVDELVSSREAGETMMVTPDRIQYMDVAPSQIVSVAASLIPFLEHDDANRALMGSNMQRQAVPCLRPEKPVVGTGIERTVAVDSGTTVQALRGGVVDYVDAGRIVIRVNDDEAVAGEVGVDIYNLIKYTRSNQNTNINQRPIVKMGDKVARGDVLADGASTDLGELALGQNMLIAFMPWNGYNFEDSILISERVVADDRYTSIHIEELNVVARDTKLGPEEITRDISNLAEVQLGRLDESGIVYIGAEVEAGDVLVGKVTPKGETQLTPEEKLLRAIFGEKASDVKDTSLRVPSGMSGTVIDVQVFTREGIQRDKRAQQIIDDELKRYRLDLNDQLRIVEGDAFQRLARMLVGKVANGGPKKLAKGTKIDQAYLEDLDHYHWFDIRLADDEAAAQLEAIKNSIEEKRHQFDLAFEEKRKKLTQGDELPPGVLKMVKVYLAVKRRLQPGDKMAGRHGNKGVVSKIVPVEDMPYMADGRPADVVLNPLGVPSRMNVGQVLEVHLGWAAKGLGWRIGEMLARQTKIEELRVFLTKIYNESGRAEDLESFSDDEILELAKNLREGVPFATPVFDGATEEEMSKMLDLAFPDDIAEQLDMNPSKNQVRLYDGRTGEPFERRVTVGYMHYLKLHHLVDDKMHARSTGPYSLVTQQPLGGKAQFGGQRFGEMEVWALEAYGASYVLQEMLTVKSDDVTGRTKVYENLVKGDHVIDAGMPESFNVLVKEIRSLGIDIDLDRN</sequence>
<organism>
    <name type="scientific">Burkholderia thailandensis (strain ATCC 700388 / DSM 13276 / CCUG 48851 / CIP 106301 / E264)</name>
    <dbReference type="NCBI Taxonomy" id="271848"/>
    <lineage>
        <taxon>Bacteria</taxon>
        <taxon>Pseudomonadati</taxon>
        <taxon>Pseudomonadota</taxon>
        <taxon>Betaproteobacteria</taxon>
        <taxon>Burkholderiales</taxon>
        <taxon>Burkholderiaceae</taxon>
        <taxon>Burkholderia</taxon>
        <taxon>pseudomallei group</taxon>
    </lineage>
</organism>
<comment type="function">
    <text evidence="1">DNA-dependent RNA polymerase catalyzes the transcription of DNA into RNA using the four ribonucleoside triphosphates as substrates.</text>
</comment>
<comment type="catalytic activity">
    <reaction evidence="1">
        <text>RNA(n) + a ribonucleoside 5'-triphosphate = RNA(n+1) + diphosphate</text>
        <dbReference type="Rhea" id="RHEA:21248"/>
        <dbReference type="Rhea" id="RHEA-COMP:14527"/>
        <dbReference type="Rhea" id="RHEA-COMP:17342"/>
        <dbReference type="ChEBI" id="CHEBI:33019"/>
        <dbReference type="ChEBI" id="CHEBI:61557"/>
        <dbReference type="ChEBI" id="CHEBI:140395"/>
        <dbReference type="EC" id="2.7.7.6"/>
    </reaction>
</comment>
<comment type="subunit">
    <text evidence="1">The RNAP catalytic core consists of 2 alpha, 1 beta, 1 beta' and 1 omega subunit. When a sigma factor is associated with the core the holoenzyme is formed, which can initiate transcription.</text>
</comment>
<comment type="similarity">
    <text evidence="1">Belongs to the RNA polymerase beta chain family.</text>
</comment>
<evidence type="ECO:0000255" key="1">
    <source>
        <dbReference type="HAMAP-Rule" id="MF_01321"/>
    </source>
</evidence>
<gene>
    <name evidence="1" type="primary">rpoB</name>
    <name type="ordered locus">BTH_I3076</name>
</gene>
<proteinExistence type="inferred from homology"/>
<name>RPOB_BURTA</name>
<keyword id="KW-0240">DNA-directed RNA polymerase</keyword>
<keyword id="KW-0548">Nucleotidyltransferase</keyword>
<keyword id="KW-0804">Transcription</keyword>
<keyword id="KW-0808">Transferase</keyword>
<feature type="chain" id="PRO_0000237299" description="DNA-directed RNA polymerase subunit beta">
    <location>
        <begin position="1"/>
        <end position="1368"/>
    </location>
</feature>